<sequence>MCFILPRMGAGVFVSDNRLQFSRSLAEVLRNQGCRVCLSAHEAARGDVPVRDGLVYWNRASPFSLRGILLQIENLGIVLETAVFVFDAQSYVDLYPGDDFSSIDRISVDLIVANMALVHMLTAHFVSQARGKLLFVHRETSAHCASAMVSVASAAFVRMAEECVLGLARKDAPRMQTLLIRLDGVDDDSYTQWIATQLASPVLSRGPGRWVRAGQRSFFGK</sequence>
<reference key="1">
    <citation type="journal article" date="1998" name="Science">
        <title>Complete genome sequence of Treponema pallidum, the syphilis spirochete.</title>
        <authorList>
            <person name="Fraser C.M."/>
            <person name="Norris S.J."/>
            <person name="Weinstock G.M."/>
            <person name="White O."/>
            <person name="Sutton G.G."/>
            <person name="Dodson R.J."/>
            <person name="Gwinn M.L."/>
            <person name="Hickey E.K."/>
            <person name="Clayton R.A."/>
            <person name="Ketchum K.A."/>
            <person name="Sodergren E."/>
            <person name="Hardham J.M."/>
            <person name="McLeod M.P."/>
            <person name="Salzberg S.L."/>
            <person name="Peterson J.D."/>
            <person name="Khalak H.G."/>
            <person name="Richardson D.L."/>
            <person name="Howell J.K."/>
            <person name="Chidambaram M."/>
            <person name="Utterback T.R."/>
            <person name="McDonald L.A."/>
            <person name="Artiach P."/>
            <person name="Bowman C."/>
            <person name="Cotton M.D."/>
            <person name="Fujii C."/>
            <person name="Garland S.A."/>
            <person name="Hatch B."/>
            <person name="Horst K."/>
            <person name="Roberts K.M."/>
            <person name="Sandusky M."/>
            <person name="Weidman J.F."/>
            <person name="Smith H.O."/>
            <person name="Venter J.C."/>
        </authorList>
    </citation>
    <scope>NUCLEOTIDE SEQUENCE [LARGE SCALE GENOMIC DNA]</scope>
    <source>
        <strain>Nichols</strain>
    </source>
</reference>
<dbReference type="EMBL" id="AE000520">
    <property type="protein sequence ID" value="AAC65787.1"/>
    <property type="molecule type" value="Genomic_DNA"/>
</dbReference>
<dbReference type="PIR" id="E71278">
    <property type="entry name" value="E71278"/>
</dbReference>
<dbReference type="RefSeq" id="WP_010882260.1">
    <property type="nucleotide sequence ID" value="NC_021490.2"/>
</dbReference>
<dbReference type="SMR" id="O83792"/>
<dbReference type="IntAct" id="O83792">
    <property type="interactions" value="5"/>
</dbReference>
<dbReference type="STRING" id="243276.TP_0816"/>
<dbReference type="EnsemblBacteria" id="AAC65787">
    <property type="protein sequence ID" value="AAC65787"/>
    <property type="gene ID" value="TP_0816"/>
</dbReference>
<dbReference type="KEGG" id="tpa:TP_0816"/>
<dbReference type="KEGG" id="tpw:TPANIC_0816"/>
<dbReference type="eggNOG" id="ENOG5031CJJ">
    <property type="taxonomic scope" value="Bacteria"/>
</dbReference>
<dbReference type="HOGENOM" id="CLU_1299268_0_0_12"/>
<dbReference type="OrthoDB" id="358257at2"/>
<dbReference type="Proteomes" id="UP000000811">
    <property type="component" value="Chromosome"/>
</dbReference>
<organism>
    <name type="scientific">Treponema pallidum (strain Nichols)</name>
    <dbReference type="NCBI Taxonomy" id="243276"/>
    <lineage>
        <taxon>Bacteria</taxon>
        <taxon>Pseudomonadati</taxon>
        <taxon>Spirochaetota</taxon>
        <taxon>Spirochaetia</taxon>
        <taxon>Spirochaetales</taxon>
        <taxon>Treponemataceae</taxon>
        <taxon>Treponema</taxon>
    </lineage>
</organism>
<feature type="chain" id="PRO_0000202333" description="Uncharacterized protein TP_0816">
    <location>
        <begin position="1"/>
        <end position="221"/>
    </location>
</feature>
<gene>
    <name type="ordered locus">TP_0816</name>
</gene>
<name>Y816_TREPA</name>
<accession>O83792</accession>
<keyword id="KW-1185">Reference proteome</keyword>
<protein>
    <recommendedName>
        <fullName>Uncharacterized protein TP_0816</fullName>
    </recommendedName>
</protein>
<proteinExistence type="predicted"/>